<evidence type="ECO:0000250" key="1"/>
<evidence type="ECO:0000250" key="2">
    <source>
        <dbReference type="UniProtKB" id="O42255"/>
    </source>
</evidence>
<evidence type="ECO:0000250" key="3">
    <source>
        <dbReference type="UniProtKB" id="Q8AY51"/>
    </source>
</evidence>
<evidence type="ECO:0000305" key="4"/>
<organism>
    <name type="scientific">Naja atra</name>
    <name type="common">Chinese cobra</name>
    <dbReference type="NCBI Taxonomy" id="8656"/>
    <lineage>
        <taxon>Eukaryota</taxon>
        <taxon>Metazoa</taxon>
        <taxon>Chordata</taxon>
        <taxon>Craniata</taxon>
        <taxon>Vertebrata</taxon>
        <taxon>Euteleostomi</taxon>
        <taxon>Lepidosauria</taxon>
        <taxon>Squamata</taxon>
        <taxon>Bifurcata</taxon>
        <taxon>Unidentata</taxon>
        <taxon>Episquamata</taxon>
        <taxon>Toxicofera</taxon>
        <taxon>Serpentes</taxon>
        <taxon>Colubroidea</taxon>
        <taxon>Elapidae</taxon>
        <taxon>Elapinae</taxon>
        <taxon>Naja</taxon>
    </lineage>
</organism>
<proteinExistence type="inferred from homology"/>
<dbReference type="EMBL" id="AJ006138">
    <property type="protein sequence ID" value="CAA06888.1"/>
    <property type="molecule type" value="mRNA"/>
</dbReference>
<dbReference type="SMR" id="P60814"/>
<dbReference type="GO" id="GO:0005576">
    <property type="term" value="C:extracellular region"/>
    <property type="evidence" value="ECO:0007669"/>
    <property type="project" value="UniProtKB-SubCell"/>
</dbReference>
<dbReference type="GO" id="GO:0030550">
    <property type="term" value="F:acetylcholine receptor inhibitor activity"/>
    <property type="evidence" value="ECO:0007669"/>
    <property type="project" value="UniProtKB-KW"/>
</dbReference>
<dbReference type="GO" id="GO:0099106">
    <property type="term" value="F:ion channel regulator activity"/>
    <property type="evidence" value="ECO:0007669"/>
    <property type="project" value="UniProtKB-KW"/>
</dbReference>
<dbReference type="GO" id="GO:0090729">
    <property type="term" value="F:toxin activity"/>
    <property type="evidence" value="ECO:0007669"/>
    <property type="project" value="UniProtKB-KW"/>
</dbReference>
<dbReference type="CDD" id="cd00206">
    <property type="entry name" value="TFP_snake_toxin"/>
    <property type="match status" value="1"/>
</dbReference>
<dbReference type="FunFam" id="2.10.60.10:FF:000024">
    <property type="entry name" value="Cytotoxin 1"/>
    <property type="match status" value="1"/>
</dbReference>
<dbReference type="Gene3D" id="2.10.60.10">
    <property type="entry name" value="CD59"/>
    <property type="match status" value="1"/>
</dbReference>
<dbReference type="InterPro" id="IPR003571">
    <property type="entry name" value="Snake_3FTx"/>
</dbReference>
<dbReference type="InterPro" id="IPR045860">
    <property type="entry name" value="Snake_toxin-like_sf"/>
</dbReference>
<dbReference type="InterPro" id="IPR018354">
    <property type="entry name" value="Snake_toxin_con_site"/>
</dbReference>
<dbReference type="InterPro" id="IPR054131">
    <property type="entry name" value="Toxin_cobra-type"/>
</dbReference>
<dbReference type="Pfam" id="PF21947">
    <property type="entry name" value="Toxin_cobra-type"/>
    <property type="match status" value="1"/>
</dbReference>
<dbReference type="SUPFAM" id="SSF57302">
    <property type="entry name" value="Snake toxin-like"/>
    <property type="match status" value="1"/>
</dbReference>
<dbReference type="PROSITE" id="PS00272">
    <property type="entry name" value="SNAKE_TOXIN"/>
    <property type="match status" value="1"/>
</dbReference>
<accession>P60814</accession>
<accession>Q9YGI7</accession>
<name>3NO2I_NAJAT</name>
<feature type="signal peptide" evidence="1">
    <location>
        <begin position="1"/>
        <end position="21"/>
    </location>
</feature>
<feature type="chain" id="PRO_0000035470" description="Probable weak neurotoxin NNAM2I">
    <location>
        <begin position="22"/>
        <end position="86"/>
    </location>
</feature>
<feature type="disulfide bond" evidence="3">
    <location>
        <begin position="24"/>
        <end position="45"/>
    </location>
</feature>
<feature type="disulfide bond" evidence="3">
    <location>
        <begin position="27"/>
        <end position="32"/>
    </location>
</feature>
<feature type="disulfide bond" evidence="3">
    <location>
        <begin position="38"/>
        <end position="63"/>
    </location>
</feature>
<feature type="disulfide bond" evidence="3">
    <location>
        <begin position="67"/>
        <end position="78"/>
    </location>
</feature>
<feature type="disulfide bond" evidence="3">
    <location>
        <begin position="79"/>
        <end position="84"/>
    </location>
</feature>
<keyword id="KW-0008">Acetylcholine receptor inhibiting toxin</keyword>
<keyword id="KW-1015">Disulfide bond</keyword>
<keyword id="KW-0872">Ion channel impairing toxin</keyword>
<keyword id="KW-0528">Neurotoxin</keyword>
<keyword id="KW-0629">Postsynaptic neurotoxin</keyword>
<keyword id="KW-0964">Secreted</keyword>
<keyword id="KW-0732">Signal</keyword>
<keyword id="KW-0800">Toxin</keyword>
<comment type="function">
    <text evidence="2">Binds with low affinity to muscular (alpha-1-beta-1-delta-epsilon/CHRNA1-CHRNB1-CHRND-CHRNE) and very low affinity to neuronal (alpha-7/CHRNA7) nicotinic acetylcholine receptor (nAChR).</text>
</comment>
<comment type="subcellular location">
    <subcellularLocation>
        <location evidence="2">Secreted</location>
    </subcellularLocation>
</comment>
<comment type="tissue specificity">
    <text evidence="4">Expressed by the venom gland.</text>
</comment>
<comment type="similarity">
    <text evidence="4">Belongs to the three-finger toxin family. Ancestral subfamily. Orphan group II sub-subfamily.</text>
</comment>
<reference key="1">
    <citation type="journal article" date="1998" name="Biochim. Biophys. Acta">
        <title>cDNA sequence analysis and expression of four long neurotoxin homologues from Naja naja atra.</title>
        <authorList>
            <person name="Qian Y.-C."/>
            <person name="Fan C.-Y."/>
            <person name="Gong Y."/>
            <person name="Yang S.-L."/>
        </authorList>
    </citation>
    <scope>NUCLEOTIDE SEQUENCE [MRNA]</scope>
    <source>
        <tissue>Venom gland</tissue>
    </source>
</reference>
<sequence length="86" mass="9811">MKTLPLTLVVVTIVCLDLGYTLTCLNCPEMFCGKFQICRNGEKICFKKLHQRRPFSLRYIRGCAATCPGTKPRDMVECCSTDRCNR</sequence>
<protein>
    <recommendedName>
        <fullName>Probable weak neurotoxin NNAM2I</fullName>
    </recommendedName>
</protein>